<name>TF2B_META3</name>
<evidence type="ECO:0000255" key="1">
    <source>
        <dbReference type="HAMAP-Rule" id="MF_00383"/>
    </source>
</evidence>
<evidence type="ECO:0000255" key="2">
    <source>
        <dbReference type="PROSITE-ProRule" id="PRU00469"/>
    </source>
</evidence>
<gene>
    <name evidence="1" type="primary">tfb</name>
    <name type="ordered locus">Maeo_1155</name>
</gene>
<comment type="function">
    <text evidence="1">Stabilizes TBP binding to an archaeal box-A promoter. Also responsible for recruiting RNA polymerase II to the pre-initiation complex (DNA-TBP-TFIIB).</text>
</comment>
<comment type="similarity">
    <text evidence="1">Belongs to the TFIIB family.</text>
</comment>
<proteinExistence type="inferred from homology"/>
<feature type="chain" id="PRO_1000080106" description="Transcription initiation factor IIB">
    <location>
        <begin position="1"/>
        <end position="334"/>
    </location>
</feature>
<feature type="repeat" description="1">
    <location>
        <begin position="151"/>
        <end position="234"/>
    </location>
</feature>
<feature type="repeat" description="2">
    <location>
        <begin position="245"/>
        <end position="326"/>
    </location>
</feature>
<feature type="zinc finger region" description="TFIIB-type" evidence="2">
    <location>
        <begin position="34"/>
        <end position="65"/>
    </location>
</feature>
<feature type="binding site" evidence="2">
    <location>
        <position position="38"/>
    </location>
    <ligand>
        <name>Zn(2+)</name>
        <dbReference type="ChEBI" id="CHEBI:29105"/>
    </ligand>
</feature>
<feature type="binding site" evidence="2">
    <location>
        <position position="41"/>
    </location>
    <ligand>
        <name>Zn(2+)</name>
        <dbReference type="ChEBI" id="CHEBI:29105"/>
    </ligand>
</feature>
<feature type="binding site" evidence="2">
    <location>
        <position position="57"/>
    </location>
    <ligand>
        <name>Zn(2+)</name>
        <dbReference type="ChEBI" id="CHEBI:29105"/>
    </ligand>
</feature>
<feature type="binding site" evidence="2">
    <location>
        <position position="60"/>
    </location>
    <ligand>
        <name>Zn(2+)</name>
        <dbReference type="ChEBI" id="CHEBI:29105"/>
    </ligand>
</feature>
<keyword id="KW-0479">Metal-binding</keyword>
<keyword id="KW-0677">Repeat</keyword>
<keyword id="KW-0804">Transcription</keyword>
<keyword id="KW-0805">Transcription regulation</keyword>
<keyword id="KW-0862">Zinc</keyword>
<keyword id="KW-0863">Zinc-finger</keyword>
<accession>A6UW60</accession>
<protein>
    <recommendedName>
        <fullName evidence="1">Transcription initiation factor IIB</fullName>
        <shortName evidence="1">TFIIB</shortName>
    </recommendedName>
</protein>
<sequence length="334" mass="37654">MDIKLISKKKNIEERKQLLSELHASKSVIVEKDEELVCPMCDSKNIIKDYEKAEIVCEDCGCVLQDNLFDVGPEWRAFDHEQRVKRSRVGAPMTYTIHDKGLSTVIDWRNKDSYGKDISADKRAQLYRLRKWQRRIRVSDASERNLAFALSELDRIASKLGLPRNVRENAAVLYRGAVEKGLIRGRSIEGVAAAALYAACRRCKVPRTLDEIAEMSRVDRKEIGRTYRFISRELKIRLAPTSPIDYVPRFASELKLPGEVESKAISILQKAGDKGLTSGRGPTGVAAAAIYIASVLHGTRKTQREVADVAGVTEVTIRNRYKELTEHLDIDVTL</sequence>
<organism>
    <name type="scientific">Methanococcus aeolicus (strain ATCC BAA-1280 / DSM 17508 / OCM 812 / Nankai-3)</name>
    <dbReference type="NCBI Taxonomy" id="419665"/>
    <lineage>
        <taxon>Archaea</taxon>
        <taxon>Methanobacteriati</taxon>
        <taxon>Methanobacteriota</taxon>
        <taxon>Methanomada group</taxon>
        <taxon>Methanococci</taxon>
        <taxon>Methanococcales</taxon>
        <taxon>Methanococcaceae</taxon>
        <taxon>Methanococcus</taxon>
    </lineage>
</organism>
<dbReference type="EMBL" id="CP000743">
    <property type="protein sequence ID" value="ABR56732.1"/>
    <property type="molecule type" value="Genomic_DNA"/>
</dbReference>
<dbReference type="RefSeq" id="WP_011973864.1">
    <property type="nucleotide sequence ID" value="NC_009635.1"/>
</dbReference>
<dbReference type="SMR" id="A6UW60"/>
<dbReference type="STRING" id="419665.Maeo_1155"/>
<dbReference type="GeneID" id="5327478"/>
<dbReference type="KEGG" id="mae:Maeo_1155"/>
<dbReference type="eggNOG" id="arCOG01981">
    <property type="taxonomic scope" value="Archaea"/>
</dbReference>
<dbReference type="HOGENOM" id="CLU_043736_0_1_2"/>
<dbReference type="OrthoDB" id="7429at2157"/>
<dbReference type="Proteomes" id="UP000001106">
    <property type="component" value="Chromosome"/>
</dbReference>
<dbReference type="GO" id="GO:0097550">
    <property type="term" value="C:transcription preinitiation complex"/>
    <property type="evidence" value="ECO:0007669"/>
    <property type="project" value="TreeGrafter"/>
</dbReference>
<dbReference type="GO" id="GO:0003700">
    <property type="term" value="F:DNA-binding transcription factor activity"/>
    <property type="evidence" value="ECO:0007669"/>
    <property type="project" value="UniProtKB-UniRule"/>
</dbReference>
<dbReference type="GO" id="GO:0017025">
    <property type="term" value="F:TBP-class protein binding"/>
    <property type="evidence" value="ECO:0007669"/>
    <property type="project" value="InterPro"/>
</dbReference>
<dbReference type="GO" id="GO:0008270">
    <property type="term" value="F:zinc ion binding"/>
    <property type="evidence" value="ECO:0007669"/>
    <property type="project" value="UniProtKB-UniRule"/>
</dbReference>
<dbReference type="GO" id="GO:0070897">
    <property type="term" value="P:transcription preinitiation complex assembly"/>
    <property type="evidence" value="ECO:0007669"/>
    <property type="project" value="InterPro"/>
</dbReference>
<dbReference type="CDD" id="cd20549">
    <property type="entry name" value="CYCLIN_TFIIB_archaea_like_rpt1"/>
    <property type="match status" value="1"/>
</dbReference>
<dbReference type="CDD" id="cd20550">
    <property type="entry name" value="CYCLIN_TFIIB_archaea_like_rpt2"/>
    <property type="match status" value="1"/>
</dbReference>
<dbReference type="FunFam" id="1.10.472.10:FF:000023">
    <property type="entry name" value="Transcription initiation factor IIB"/>
    <property type="match status" value="1"/>
</dbReference>
<dbReference type="FunFam" id="1.10.472.170:FF:000001">
    <property type="entry name" value="Transcription initiation factor IIB"/>
    <property type="match status" value="1"/>
</dbReference>
<dbReference type="FunFam" id="2.20.25.10:FF:000037">
    <property type="entry name" value="Transcription initiation factor IIB"/>
    <property type="match status" value="1"/>
</dbReference>
<dbReference type="Gene3D" id="1.10.472.170">
    <property type="match status" value="1"/>
</dbReference>
<dbReference type="Gene3D" id="1.10.472.10">
    <property type="entry name" value="Cyclin-like"/>
    <property type="match status" value="1"/>
</dbReference>
<dbReference type="HAMAP" id="MF_00383">
    <property type="entry name" value="TF2B_arch"/>
    <property type="match status" value="1"/>
</dbReference>
<dbReference type="InterPro" id="IPR013763">
    <property type="entry name" value="Cyclin-like_dom"/>
</dbReference>
<dbReference type="InterPro" id="IPR036915">
    <property type="entry name" value="Cyclin-like_sf"/>
</dbReference>
<dbReference type="InterPro" id="IPR000812">
    <property type="entry name" value="TFIIB"/>
</dbReference>
<dbReference type="InterPro" id="IPR023484">
    <property type="entry name" value="TFIIB_arc"/>
</dbReference>
<dbReference type="InterPro" id="IPR023486">
    <property type="entry name" value="TFIIB_CS"/>
</dbReference>
<dbReference type="InterPro" id="IPR013150">
    <property type="entry name" value="TFIIB_cyclin"/>
</dbReference>
<dbReference type="InterPro" id="IPR013137">
    <property type="entry name" value="Znf_TFIIB"/>
</dbReference>
<dbReference type="NCBIfam" id="NF001658">
    <property type="entry name" value="PRK00423.1"/>
    <property type="match status" value="1"/>
</dbReference>
<dbReference type="PANTHER" id="PTHR11618:SF13">
    <property type="entry name" value="TRANSCRIPTION INITIATION FACTOR IIB"/>
    <property type="match status" value="1"/>
</dbReference>
<dbReference type="PANTHER" id="PTHR11618">
    <property type="entry name" value="TRANSCRIPTION INITIATION FACTOR IIB-RELATED"/>
    <property type="match status" value="1"/>
</dbReference>
<dbReference type="Pfam" id="PF00382">
    <property type="entry name" value="TFIIB"/>
    <property type="match status" value="2"/>
</dbReference>
<dbReference type="Pfam" id="PF08271">
    <property type="entry name" value="Zn_Ribbon_TF"/>
    <property type="match status" value="1"/>
</dbReference>
<dbReference type="PRINTS" id="PR00685">
    <property type="entry name" value="TIFACTORIIB"/>
</dbReference>
<dbReference type="SMART" id="SM00385">
    <property type="entry name" value="CYCLIN"/>
    <property type="match status" value="2"/>
</dbReference>
<dbReference type="SUPFAM" id="SSF47954">
    <property type="entry name" value="Cyclin-like"/>
    <property type="match status" value="2"/>
</dbReference>
<dbReference type="SUPFAM" id="SSF57783">
    <property type="entry name" value="Zinc beta-ribbon"/>
    <property type="match status" value="1"/>
</dbReference>
<dbReference type="PROSITE" id="PS00782">
    <property type="entry name" value="TFIIB"/>
    <property type="match status" value="2"/>
</dbReference>
<dbReference type="PROSITE" id="PS51134">
    <property type="entry name" value="ZF_TFIIB"/>
    <property type="match status" value="1"/>
</dbReference>
<reference key="1">
    <citation type="submission" date="2007-06" db="EMBL/GenBank/DDBJ databases">
        <title>Complete sequence of Methanococcus aeolicus Nankai-3.</title>
        <authorList>
            <consortium name="US DOE Joint Genome Institute"/>
            <person name="Copeland A."/>
            <person name="Lucas S."/>
            <person name="Lapidus A."/>
            <person name="Barry K."/>
            <person name="Glavina del Rio T."/>
            <person name="Dalin E."/>
            <person name="Tice H."/>
            <person name="Pitluck S."/>
            <person name="Chain P."/>
            <person name="Malfatti S."/>
            <person name="Shin M."/>
            <person name="Vergez L."/>
            <person name="Schmutz J."/>
            <person name="Larimer F."/>
            <person name="Land M."/>
            <person name="Hauser L."/>
            <person name="Kyrpides N."/>
            <person name="Lykidis A."/>
            <person name="Sieprawska-Lupa M."/>
            <person name="Whitman W.B."/>
            <person name="Richardson P."/>
        </authorList>
    </citation>
    <scope>NUCLEOTIDE SEQUENCE [LARGE SCALE GENOMIC DNA]</scope>
    <source>
        <strain>ATCC BAA-1280 / DSM 17508 / OCM 812 / Nankai-3</strain>
    </source>
</reference>